<gene>
    <name type="primary">GBF3</name>
    <name type="synonym">BZIP55</name>
    <name type="ordered locus">At2g46270</name>
    <name type="ORF">T3F17.8</name>
</gene>
<sequence>MGNSSEEPKPPTKSDKPSSPPVDQTNVHVYPDWAAMQAYYGPRVAMPPYYNSAMAASGHPPPPYMWNPQHMMSPYGAPYAAVYPHGGGVYAHPGIPMGSLPQGQKDPPLTTPGTLLSIDTPTKSTGNTDNGLMKKLKEFDGLAMSLGNGNPENGADEHKRSRNSSETDGSTDGSDGNTTGADEPKLKRSREGTPTKDGKQLVQASSFHSVSPSSGDTGVKLIQGSGAILSPGVSANSNPFMSQSLAMVPPETWLQNERELKRERRKQSNRESARRSRLRKQAETEELARKVEALTAENMALRSELNQLNEKSDKLRGANATLLDKLKCSEPEKRVPANMLSRVKNSGAGDKNKNQGDNDSNSTSKLHQLLDTKPRAKAVAAG</sequence>
<comment type="function">
    <text evidence="5">Binds to the G-box motif (5'-CCACGTGG-3') of the rbcS-1A gene promoter. G-box and G-box-like motifs are cis-acting elements defined in promoters of certain plant genes which are regulated by such diverse stimuli as light-induction or hormone control.</text>
</comment>
<comment type="subunit">
    <text evidence="3 4">DNA-binding heterodimer. Interacts with GBF4 (PubMed:8146148). Interacts with BZIP16 and BZIP68 (PubMed:18315949).</text>
</comment>
<comment type="subcellular location">
    <subcellularLocation>
        <location evidence="1 5">Nucleus</location>
    </subcellularLocation>
</comment>
<comment type="alternative products">
    <event type="alternative splicing"/>
    <isoform>
        <id>P42776-1</id>
        <name>1</name>
        <sequence type="displayed"/>
    </isoform>
    <text>A number of isoforms are produced. According to EST sequences.</text>
</comment>
<comment type="tissue specificity">
    <text evidence="5">Present only in dark grown leaves and roots.</text>
</comment>
<comment type="similarity">
    <text evidence="6">Belongs to the bZIP family.</text>
</comment>
<feature type="chain" id="PRO_0000076567" description="G-box-binding factor 3">
    <location>
        <begin position="1"/>
        <end position="382"/>
    </location>
</feature>
<feature type="domain" description="bZIP" evidence="1">
    <location>
        <begin position="259"/>
        <end position="322"/>
    </location>
</feature>
<feature type="region of interest" description="Disordered" evidence="2">
    <location>
        <begin position="1"/>
        <end position="26"/>
    </location>
</feature>
<feature type="region of interest" description="Disordered" evidence="2">
    <location>
        <begin position="97"/>
        <end position="221"/>
    </location>
</feature>
<feature type="region of interest" description="Disordered" evidence="2">
    <location>
        <begin position="257"/>
        <end position="285"/>
    </location>
</feature>
<feature type="region of interest" description="Basic motif" evidence="1">
    <location>
        <begin position="261"/>
        <end position="280"/>
    </location>
</feature>
<feature type="region of interest" description="Leucine-zipper" evidence="1">
    <location>
        <begin position="287"/>
        <end position="322"/>
    </location>
</feature>
<feature type="region of interest" description="Disordered" evidence="2">
    <location>
        <begin position="329"/>
        <end position="382"/>
    </location>
</feature>
<feature type="compositionally biased region" description="Basic and acidic residues" evidence="2">
    <location>
        <begin position="1"/>
        <end position="16"/>
    </location>
</feature>
<feature type="compositionally biased region" description="Polar residues" evidence="2">
    <location>
        <begin position="111"/>
        <end position="130"/>
    </location>
</feature>
<feature type="compositionally biased region" description="Basic and acidic residues" evidence="2">
    <location>
        <begin position="155"/>
        <end position="165"/>
    </location>
</feature>
<feature type="compositionally biased region" description="Low complexity" evidence="2">
    <location>
        <begin position="166"/>
        <end position="181"/>
    </location>
</feature>
<feature type="compositionally biased region" description="Basic and acidic residues" evidence="2">
    <location>
        <begin position="182"/>
        <end position="199"/>
    </location>
</feature>
<feature type="compositionally biased region" description="Polar residues" evidence="2">
    <location>
        <begin position="202"/>
        <end position="216"/>
    </location>
</feature>
<feature type="compositionally biased region" description="Polar residues" evidence="2">
    <location>
        <begin position="357"/>
        <end position="366"/>
    </location>
</feature>
<feature type="sequence conflict" description="In Ref. 1; AAA90947/AAB06611." evidence="6" ref="1">
    <original>Y</original>
    <variation>S</variation>
    <location>
        <position position="75"/>
    </location>
</feature>
<feature type="sequence conflict" description="In Ref. 1; AAA90947/AAB06611." evidence="6" ref="1">
    <original>L</original>
    <variation>F</variation>
    <location>
        <position position="366"/>
    </location>
</feature>
<accession>P42776</accession>
<evidence type="ECO:0000255" key="1">
    <source>
        <dbReference type="PROSITE-ProRule" id="PRU00978"/>
    </source>
</evidence>
<evidence type="ECO:0000256" key="2">
    <source>
        <dbReference type="SAM" id="MobiDB-lite"/>
    </source>
</evidence>
<evidence type="ECO:0000269" key="3">
    <source>
    </source>
</evidence>
<evidence type="ECO:0000269" key="4">
    <source>
    </source>
</evidence>
<evidence type="ECO:0000269" key="5">
    <source>
    </source>
</evidence>
<evidence type="ECO:0000305" key="6"/>
<dbReference type="EMBL" id="U17891">
    <property type="protein sequence ID" value="AAA90947.1"/>
    <property type="molecule type" value="mRNA"/>
</dbReference>
<dbReference type="EMBL" id="U51850">
    <property type="protein sequence ID" value="AAB06611.1"/>
    <property type="molecule type" value="mRNA"/>
</dbReference>
<dbReference type="EMBL" id="AC005397">
    <property type="protein sequence ID" value="AAC62879.1"/>
    <property type="molecule type" value="Genomic_DNA"/>
</dbReference>
<dbReference type="EMBL" id="CP002685">
    <property type="protein sequence ID" value="AEC10667.1"/>
    <property type="molecule type" value="Genomic_DNA"/>
</dbReference>
<dbReference type="EMBL" id="CP002685">
    <property type="protein sequence ID" value="ANM61227.1"/>
    <property type="molecule type" value="Genomic_DNA"/>
</dbReference>
<dbReference type="EMBL" id="AF370307">
    <property type="protein sequence ID" value="AAK44122.1"/>
    <property type="molecule type" value="mRNA"/>
</dbReference>
<dbReference type="EMBL" id="AY063093">
    <property type="protein sequence ID" value="AAL34267.1"/>
    <property type="molecule type" value="mRNA"/>
</dbReference>
<dbReference type="EMBL" id="X63896">
    <property type="protein sequence ID" value="CAA45358.1"/>
    <property type="molecule type" value="mRNA"/>
</dbReference>
<dbReference type="PIR" id="G84900">
    <property type="entry name" value="G84900"/>
</dbReference>
<dbReference type="PIR" id="S20885">
    <property type="entry name" value="S20885"/>
</dbReference>
<dbReference type="RefSeq" id="NP_001323457.1">
    <molecule id="P42776-1"/>
    <property type="nucleotide sequence ID" value="NM_001337182.1"/>
</dbReference>
<dbReference type="RefSeq" id="NP_182150.1">
    <molecule id="P42776-1"/>
    <property type="nucleotide sequence ID" value="NM_130190.3"/>
</dbReference>
<dbReference type="SMR" id="P42776"/>
<dbReference type="BioGRID" id="4570">
    <property type="interactions" value="6"/>
</dbReference>
<dbReference type="FunCoup" id="P42776">
    <property type="interactions" value="55"/>
</dbReference>
<dbReference type="IntAct" id="P42776">
    <property type="interactions" value="5"/>
</dbReference>
<dbReference type="STRING" id="3702.P42776"/>
<dbReference type="GlyGen" id="P42776">
    <property type="glycosylation" value="1 site"/>
</dbReference>
<dbReference type="iPTMnet" id="P42776"/>
<dbReference type="PaxDb" id="3702-AT2G46270.1"/>
<dbReference type="ProteomicsDB" id="222180">
    <molecule id="P42776-1"/>
</dbReference>
<dbReference type="EnsemblPlants" id="AT2G46270.1">
    <molecule id="P42776-1"/>
    <property type="protein sequence ID" value="AT2G46270.1"/>
    <property type="gene ID" value="AT2G46270"/>
</dbReference>
<dbReference type="EnsemblPlants" id="AT2G46270.3">
    <molecule id="P42776-1"/>
    <property type="protein sequence ID" value="AT2G46270.3"/>
    <property type="gene ID" value="AT2G46270"/>
</dbReference>
<dbReference type="GeneID" id="819235"/>
<dbReference type="Gramene" id="AT2G46270.1">
    <molecule id="P42776-1"/>
    <property type="protein sequence ID" value="AT2G46270.1"/>
    <property type="gene ID" value="AT2G46270"/>
</dbReference>
<dbReference type="Gramene" id="AT2G46270.3">
    <molecule id="P42776-1"/>
    <property type="protein sequence ID" value="AT2G46270.3"/>
    <property type="gene ID" value="AT2G46270"/>
</dbReference>
<dbReference type="KEGG" id="ath:AT2G46270"/>
<dbReference type="Araport" id="AT2G46270"/>
<dbReference type="TAIR" id="AT2G46270">
    <property type="gene designation" value="GBF3"/>
</dbReference>
<dbReference type="eggNOG" id="ENOG502QRCN">
    <property type="taxonomic scope" value="Eukaryota"/>
</dbReference>
<dbReference type="InParanoid" id="P42776"/>
<dbReference type="OMA" id="PASAHMK"/>
<dbReference type="OrthoDB" id="1642657at2759"/>
<dbReference type="PhylomeDB" id="P42776"/>
<dbReference type="PRO" id="PR:P42776"/>
<dbReference type="Proteomes" id="UP000006548">
    <property type="component" value="Chromosome 2"/>
</dbReference>
<dbReference type="ExpressionAtlas" id="P42776">
    <property type="expression patterns" value="baseline and differential"/>
</dbReference>
<dbReference type="GO" id="GO:0005829">
    <property type="term" value="C:cytosol"/>
    <property type="evidence" value="ECO:0000314"/>
    <property type="project" value="TAIR"/>
</dbReference>
<dbReference type="GO" id="GO:0005634">
    <property type="term" value="C:nucleus"/>
    <property type="evidence" value="ECO:0007669"/>
    <property type="project" value="UniProtKB-SubCell"/>
</dbReference>
<dbReference type="GO" id="GO:0003700">
    <property type="term" value="F:DNA-binding transcription factor activity"/>
    <property type="evidence" value="ECO:0000250"/>
    <property type="project" value="TAIR"/>
</dbReference>
<dbReference type="GO" id="GO:0043565">
    <property type="term" value="F:sequence-specific DNA binding"/>
    <property type="evidence" value="ECO:0000314"/>
    <property type="project" value="TAIR"/>
</dbReference>
<dbReference type="GO" id="GO:0000976">
    <property type="term" value="F:transcription cis-regulatory region binding"/>
    <property type="evidence" value="ECO:0000353"/>
    <property type="project" value="TAIR"/>
</dbReference>
<dbReference type="GO" id="GO:0009737">
    <property type="term" value="P:response to abscisic acid"/>
    <property type="evidence" value="ECO:0000270"/>
    <property type="project" value="TAIR"/>
</dbReference>
<dbReference type="CDD" id="cd14702">
    <property type="entry name" value="bZIP_plant_GBF1"/>
    <property type="match status" value="1"/>
</dbReference>
<dbReference type="FunFam" id="1.20.5.170:FF:000063">
    <property type="entry name" value="G-box binding factor 3"/>
    <property type="match status" value="1"/>
</dbReference>
<dbReference type="Gene3D" id="1.20.5.170">
    <property type="match status" value="1"/>
</dbReference>
<dbReference type="InterPro" id="IPR004827">
    <property type="entry name" value="bZIP"/>
</dbReference>
<dbReference type="InterPro" id="IPR045314">
    <property type="entry name" value="bZIP_plant_GBF1"/>
</dbReference>
<dbReference type="InterPro" id="IPR046347">
    <property type="entry name" value="bZIP_sf"/>
</dbReference>
<dbReference type="InterPro" id="IPR044827">
    <property type="entry name" value="GBF-like"/>
</dbReference>
<dbReference type="InterPro" id="IPR012900">
    <property type="entry name" value="MFMR"/>
</dbReference>
<dbReference type="PANTHER" id="PTHR45967:SF1">
    <property type="entry name" value="G-BOX-BINDING FACTOR 3"/>
    <property type="match status" value="1"/>
</dbReference>
<dbReference type="PANTHER" id="PTHR45967">
    <property type="entry name" value="G-BOX-BINDING FACTOR 3-RELATED"/>
    <property type="match status" value="1"/>
</dbReference>
<dbReference type="Pfam" id="PF00170">
    <property type="entry name" value="bZIP_1"/>
    <property type="match status" value="1"/>
</dbReference>
<dbReference type="Pfam" id="PF07777">
    <property type="entry name" value="MFMR"/>
    <property type="match status" value="1"/>
</dbReference>
<dbReference type="Pfam" id="PF16596">
    <property type="entry name" value="MFMR_assoc"/>
    <property type="match status" value="1"/>
</dbReference>
<dbReference type="SMART" id="SM00338">
    <property type="entry name" value="BRLZ"/>
    <property type="match status" value="1"/>
</dbReference>
<dbReference type="SUPFAM" id="SSF57959">
    <property type="entry name" value="Leucine zipper domain"/>
    <property type="match status" value="1"/>
</dbReference>
<dbReference type="PROSITE" id="PS50217">
    <property type="entry name" value="BZIP"/>
    <property type="match status" value="1"/>
</dbReference>
<dbReference type="PROSITE" id="PS00036">
    <property type="entry name" value="BZIP_BASIC"/>
    <property type="match status" value="1"/>
</dbReference>
<keyword id="KW-0025">Alternative splicing</keyword>
<keyword id="KW-0238">DNA-binding</keyword>
<keyword id="KW-0539">Nucleus</keyword>
<keyword id="KW-1185">Reference proteome</keyword>
<keyword id="KW-0804">Transcription</keyword>
<keyword id="KW-0805">Transcription regulation</keyword>
<organism>
    <name type="scientific">Arabidopsis thaliana</name>
    <name type="common">Mouse-ear cress</name>
    <dbReference type="NCBI Taxonomy" id="3702"/>
    <lineage>
        <taxon>Eukaryota</taxon>
        <taxon>Viridiplantae</taxon>
        <taxon>Streptophyta</taxon>
        <taxon>Embryophyta</taxon>
        <taxon>Tracheophyta</taxon>
        <taxon>Spermatophyta</taxon>
        <taxon>Magnoliopsida</taxon>
        <taxon>eudicotyledons</taxon>
        <taxon>Gunneridae</taxon>
        <taxon>Pentapetalae</taxon>
        <taxon>rosids</taxon>
        <taxon>malvids</taxon>
        <taxon>Brassicales</taxon>
        <taxon>Brassicaceae</taxon>
        <taxon>Camelineae</taxon>
        <taxon>Arabidopsis</taxon>
    </lineage>
</organism>
<name>GBF3_ARATH</name>
<protein>
    <recommendedName>
        <fullName>G-box-binding factor 3</fullName>
    </recommendedName>
    <alternativeName>
        <fullName>bZIP transcription factor 55</fullName>
        <shortName>AtbZIP55</shortName>
    </alternativeName>
</protein>
<reference key="1">
    <citation type="journal article" date="1996" name="Plant Cell">
        <title>Transcription factor veracity: is GBF3 responsible for ABA-regulated expression of Arabidopsis Adh?</title>
        <authorList>
            <person name="Lu G.H."/>
            <person name="Paul A.L."/>
            <person name="McCarty D.R."/>
            <person name="Ferl R.J."/>
        </authorList>
    </citation>
    <scope>NUCLEOTIDE SEQUENCE [MRNA]</scope>
    <scope>FUNCTION</scope>
    <scope>SUBCELLULAR LOCATION</scope>
    <scope>TISSUE SPECIFICITY</scope>
    <source>
        <strain>cv. Columbia</strain>
    </source>
</reference>
<reference key="2">
    <citation type="journal article" date="1999" name="Nature">
        <title>Sequence and analysis of chromosome 2 of the plant Arabidopsis thaliana.</title>
        <authorList>
            <person name="Lin X."/>
            <person name="Kaul S."/>
            <person name="Rounsley S.D."/>
            <person name="Shea T.P."/>
            <person name="Benito M.-I."/>
            <person name="Town C.D."/>
            <person name="Fujii C.Y."/>
            <person name="Mason T.M."/>
            <person name="Bowman C.L."/>
            <person name="Barnstead M.E."/>
            <person name="Feldblyum T.V."/>
            <person name="Buell C.R."/>
            <person name="Ketchum K.A."/>
            <person name="Lee J.J."/>
            <person name="Ronning C.M."/>
            <person name="Koo H.L."/>
            <person name="Moffat K.S."/>
            <person name="Cronin L.A."/>
            <person name="Shen M."/>
            <person name="Pai G."/>
            <person name="Van Aken S."/>
            <person name="Umayam L."/>
            <person name="Tallon L.J."/>
            <person name="Gill J.E."/>
            <person name="Adams M.D."/>
            <person name="Carrera A.J."/>
            <person name="Creasy T.H."/>
            <person name="Goodman H.M."/>
            <person name="Somerville C.R."/>
            <person name="Copenhaver G.P."/>
            <person name="Preuss D."/>
            <person name="Nierman W.C."/>
            <person name="White O."/>
            <person name="Eisen J.A."/>
            <person name="Salzberg S.L."/>
            <person name="Fraser C.M."/>
            <person name="Venter J.C."/>
        </authorList>
    </citation>
    <scope>NUCLEOTIDE SEQUENCE [LARGE SCALE GENOMIC DNA]</scope>
    <source>
        <strain>cv. Columbia</strain>
    </source>
</reference>
<reference key="3">
    <citation type="journal article" date="2017" name="Plant J.">
        <title>Araport11: a complete reannotation of the Arabidopsis thaliana reference genome.</title>
        <authorList>
            <person name="Cheng C.Y."/>
            <person name="Krishnakumar V."/>
            <person name="Chan A.P."/>
            <person name="Thibaud-Nissen F."/>
            <person name="Schobel S."/>
            <person name="Town C.D."/>
        </authorList>
    </citation>
    <scope>GENOME REANNOTATION</scope>
    <source>
        <strain>cv. Columbia</strain>
    </source>
</reference>
<reference key="4">
    <citation type="journal article" date="2003" name="Science">
        <title>Empirical analysis of transcriptional activity in the Arabidopsis genome.</title>
        <authorList>
            <person name="Yamada K."/>
            <person name="Lim J."/>
            <person name="Dale J.M."/>
            <person name="Chen H."/>
            <person name="Shinn P."/>
            <person name="Palm C.J."/>
            <person name="Southwick A.M."/>
            <person name="Wu H.C."/>
            <person name="Kim C.J."/>
            <person name="Nguyen M."/>
            <person name="Pham P.K."/>
            <person name="Cheuk R.F."/>
            <person name="Karlin-Newmann G."/>
            <person name="Liu S.X."/>
            <person name="Lam B."/>
            <person name="Sakano H."/>
            <person name="Wu T."/>
            <person name="Yu G."/>
            <person name="Miranda M."/>
            <person name="Quach H.L."/>
            <person name="Tripp M."/>
            <person name="Chang C.H."/>
            <person name="Lee J.M."/>
            <person name="Toriumi M.J."/>
            <person name="Chan M.M."/>
            <person name="Tang C.C."/>
            <person name="Onodera C.S."/>
            <person name="Deng J.M."/>
            <person name="Akiyama K."/>
            <person name="Ansari Y."/>
            <person name="Arakawa T."/>
            <person name="Banh J."/>
            <person name="Banno F."/>
            <person name="Bowser L."/>
            <person name="Brooks S.Y."/>
            <person name="Carninci P."/>
            <person name="Chao Q."/>
            <person name="Choy N."/>
            <person name="Enju A."/>
            <person name="Goldsmith A.D."/>
            <person name="Gurjal M."/>
            <person name="Hansen N.F."/>
            <person name="Hayashizaki Y."/>
            <person name="Johnson-Hopson C."/>
            <person name="Hsuan V.W."/>
            <person name="Iida K."/>
            <person name="Karnes M."/>
            <person name="Khan S."/>
            <person name="Koesema E."/>
            <person name="Ishida J."/>
            <person name="Jiang P.X."/>
            <person name="Jones T."/>
            <person name="Kawai J."/>
            <person name="Kamiya A."/>
            <person name="Meyers C."/>
            <person name="Nakajima M."/>
            <person name="Narusaka M."/>
            <person name="Seki M."/>
            <person name="Sakurai T."/>
            <person name="Satou M."/>
            <person name="Tamse R."/>
            <person name="Vaysberg M."/>
            <person name="Wallender E.K."/>
            <person name="Wong C."/>
            <person name="Yamamura Y."/>
            <person name="Yuan S."/>
            <person name="Shinozaki K."/>
            <person name="Davis R.W."/>
            <person name="Theologis A."/>
            <person name="Ecker J.R."/>
        </authorList>
    </citation>
    <scope>NUCLEOTIDE SEQUENCE [LARGE SCALE MRNA]</scope>
    <source>
        <strain>cv. Columbia</strain>
    </source>
</reference>
<reference key="5">
    <citation type="journal article" date="1992" name="EMBO J.">
        <title>Heterodimerization between light-regulated and ubiquitously expressed Arabidopsis GBF bZIP proteins.</title>
        <authorList>
            <person name="Schindler U."/>
            <person name="Menkens A.E."/>
            <person name="Beckmann H."/>
            <person name="Ecker J.R."/>
            <person name="Cashmore A.R."/>
        </authorList>
    </citation>
    <scope>NUCLEOTIDE SEQUENCE [MRNA] OF 59-382</scope>
    <source>
        <strain>cv. Columbia</strain>
        <tissue>Leaf</tissue>
        <tissue>Stem</tissue>
    </source>
</reference>
<reference key="6">
    <citation type="journal article" date="1994" name="Proc. Natl. Acad. Sci. U.S.A.">
        <title>Isolation and characterization of a fourth Arabidopsis thaliana G-box-binding factor, which has similarities to Fos oncoprotein.</title>
        <authorList>
            <person name="Menkens A.E."/>
            <person name="Cashmore A.R."/>
        </authorList>
    </citation>
    <scope>INTERACTION WITH GBF4</scope>
    <source>
        <strain>cv. Columbia</strain>
    </source>
</reference>
<reference key="7">
    <citation type="journal article" date="2002" name="Trends Plant Sci.">
        <title>bZIP transcription factors in Arabidopsis.</title>
        <authorList>
            <person name="Jakoby M."/>
            <person name="Weisshaar B."/>
            <person name="Droege-Laser W."/>
            <person name="Vicente-Carbajosa J."/>
            <person name="Tiedemann J."/>
            <person name="Kroj T."/>
            <person name="Parcy F."/>
        </authorList>
    </citation>
    <scope>GENE FAMILY</scope>
    <scope>NOMENCLATURE</scope>
</reference>
<reference key="8">
    <citation type="journal article" date="2008" name="BMB Rep.">
        <title>AtbZIP16 and AtbZIP68, two new members of GBFs, can interact with other G group bZIPs in Arabidopsis thaliana.</title>
        <authorList>
            <person name="Shen H."/>
            <person name="Cao K."/>
            <person name="Wang X."/>
        </authorList>
    </citation>
    <scope>INTERACTION WITH BZIP16 AND BZIP68</scope>
</reference>
<proteinExistence type="evidence at protein level"/>